<gene>
    <name type="primary">FBP1</name>
    <name type="ordered locus">KLLA0E01210g</name>
</gene>
<sequence length="355" mass="38899">MAGIKHRRDSAESINTDIITLSRFILDQQHLSAKNATGEFSMLLNSLQFAFKFISQTIRRAELVNLIGLAGASNSTGDQQKKLDVLGDEIFINAMKASGNVKVLVSEEQEDLIVFRNSPGKYAVCCDPIDGSSNLDAGVSVGTIVSLFKIHENQNGNSGEEDSEGTINDVARCGREMVAACYTMYGASTHLVLTTGAGVNGFTLDNNLGEFILTYPELRLPEQKSIYSINEGNTCYWEPTIADFIAKLKENSEENNGKPYSARYIGSMVADVHRTLLYGGLFSYPGDKKNPNGKLRLLYEAFPMAFLVEQAGGKAVNDRGERILDLVPQHIHDKSSIWLGSSGDVDKYLKHIGKL</sequence>
<proteinExistence type="inferred from homology"/>
<evidence type="ECO:0000250" key="1"/>
<evidence type="ECO:0000250" key="2">
    <source>
        <dbReference type="UniProtKB" id="P00636"/>
    </source>
</evidence>
<evidence type="ECO:0000305" key="3"/>
<accession>Q05079</accession>
<organism>
    <name type="scientific">Kluyveromyces lactis (strain ATCC 8585 / CBS 2359 / DSM 70799 / NBRC 1267 / NRRL Y-1140 / WM37)</name>
    <name type="common">Yeast</name>
    <name type="synonym">Candida sphaerica</name>
    <dbReference type="NCBI Taxonomy" id="284590"/>
    <lineage>
        <taxon>Eukaryota</taxon>
        <taxon>Fungi</taxon>
        <taxon>Dikarya</taxon>
        <taxon>Ascomycota</taxon>
        <taxon>Saccharomycotina</taxon>
        <taxon>Saccharomycetes</taxon>
        <taxon>Saccharomycetales</taxon>
        <taxon>Saccharomycetaceae</taxon>
        <taxon>Kluyveromyces</taxon>
    </lineage>
</organism>
<name>F16P_KLULA</name>
<dbReference type="EC" id="3.1.3.11"/>
<dbReference type="EMBL" id="X70181">
    <property type="protein sequence ID" value="CAA49728.1"/>
    <property type="molecule type" value="Genomic_DNA"/>
</dbReference>
<dbReference type="EMBL" id="CR382125">
    <property type="protein sequence ID" value="CAG99090.1"/>
    <property type="molecule type" value="Genomic_DNA"/>
</dbReference>
<dbReference type="PIR" id="S29397">
    <property type="entry name" value="S29397"/>
</dbReference>
<dbReference type="RefSeq" id="XP_454003.1">
    <property type="nucleotide sequence ID" value="XM_454003.1"/>
</dbReference>
<dbReference type="SMR" id="Q05079"/>
<dbReference type="FunCoup" id="Q05079">
    <property type="interactions" value="634"/>
</dbReference>
<dbReference type="STRING" id="284590.Q05079"/>
<dbReference type="PaxDb" id="284590-Q05079"/>
<dbReference type="KEGG" id="kla:KLLA0_E01211g"/>
<dbReference type="eggNOG" id="KOG1458">
    <property type="taxonomic scope" value="Eukaryota"/>
</dbReference>
<dbReference type="HOGENOM" id="CLU_039977_1_0_1"/>
<dbReference type="InParanoid" id="Q05079"/>
<dbReference type="OMA" id="YIPENCP"/>
<dbReference type="UniPathway" id="UPA00138"/>
<dbReference type="Proteomes" id="UP000000598">
    <property type="component" value="Chromosome E"/>
</dbReference>
<dbReference type="GO" id="GO:0005829">
    <property type="term" value="C:cytosol"/>
    <property type="evidence" value="ECO:0007669"/>
    <property type="project" value="TreeGrafter"/>
</dbReference>
<dbReference type="GO" id="GO:0042132">
    <property type="term" value="F:fructose 1,6-bisphosphate 1-phosphatase activity"/>
    <property type="evidence" value="ECO:0007669"/>
    <property type="project" value="UniProtKB-EC"/>
</dbReference>
<dbReference type="GO" id="GO:0046872">
    <property type="term" value="F:metal ion binding"/>
    <property type="evidence" value="ECO:0007669"/>
    <property type="project" value="UniProtKB-KW"/>
</dbReference>
<dbReference type="GO" id="GO:0030388">
    <property type="term" value="P:fructose 1,6-bisphosphate metabolic process"/>
    <property type="evidence" value="ECO:0007669"/>
    <property type="project" value="TreeGrafter"/>
</dbReference>
<dbReference type="GO" id="GO:0006002">
    <property type="term" value="P:fructose 6-phosphate metabolic process"/>
    <property type="evidence" value="ECO:0007669"/>
    <property type="project" value="TreeGrafter"/>
</dbReference>
<dbReference type="GO" id="GO:0006000">
    <property type="term" value="P:fructose metabolic process"/>
    <property type="evidence" value="ECO:0007669"/>
    <property type="project" value="TreeGrafter"/>
</dbReference>
<dbReference type="GO" id="GO:0006094">
    <property type="term" value="P:gluconeogenesis"/>
    <property type="evidence" value="ECO:0007669"/>
    <property type="project" value="UniProtKB-UniPathway"/>
</dbReference>
<dbReference type="GO" id="GO:0005986">
    <property type="term" value="P:sucrose biosynthetic process"/>
    <property type="evidence" value="ECO:0007669"/>
    <property type="project" value="TreeGrafter"/>
</dbReference>
<dbReference type="CDD" id="cd00354">
    <property type="entry name" value="FBPase"/>
    <property type="match status" value="1"/>
</dbReference>
<dbReference type="FunFam" id="3.30.540.10:FF:000002">
    <property type="entry name" value="Fructose-1,6-bisphosphatase class 1"/>
    <property type="match status" value="1"/>
</dbReference>
<dbReference type="FunFam" id="3.40.190.80:FF:000001">
    <property type="entry name" value="Fructose-1,6-bisphosphatase class 1"/>
    <property type="match status" value="1"/>
</dbReference>
<dbReference type="Gene3D" id="3.40.190.80">
    <property type="match status" value="1"/>
</dbReference>
<dbReference type="Gene3D" id="3.30.540.10">
    <property type="entry name" value="Fructose-1,6-Bisphosphatase, subunit A, domain 1"/>
    <property type="match status" value="1"/>
</dbReference>
<dbReference type="HAMAP" id="MF_01855">
    <property type="entry name" value="FBPase_class1"/>
    <property type="match status" value="1"/>
</dbReference>
<dbReference type="InterPro" id="IPR044015">
    <property type="entry name" value="FBPase_C_dom"/>
</dbReference>
<dbReference type="InterPro" id="IPR000146">
    <property type="entry name" value="FBPase_class-1"/>
</dbReference>
<dbReference type="InterPro" id="IPR033391">
    <property type="entry name" value="FBPase_N"/>
</dbReference>
<dbReference type="InterPro" id="IPR028343">
    <property type="entry name" value="FBPtase"/>
</dbReference>
<dbReference type="InterPro" id="IPR020548">
    <property type="entry name" value="Fructose_bisphosphatase_AS"/>
</dbReference>
<dbReference type="NCBIfam" id="NF006778">
    <property type="entry name" value="PRK09293.1-1"/>
    <property type="match status" value="1"/>
</dbReference>
<dbReference type="PANTHER" id="PTHR11556">
    <property type="entry name" value="FRUCTOSE-1,6-BISPHOSPHATASE-RELATED"/>
    <property type="match status" value="1"/>
</dbReference>
<dbReference type="PANTHER" id="PTHR11556:SF1">
    <property type="entry name" value="FRUCTOSE-BISPHOSPHATASE"/>
    <property type="match status" value="1"/>
</dbReference>
<dbReference type="Pfam" id="PF00316">
    <property type="entry name" value="FBPase"/>
    <property type="match status" value="1"/>
</dbReference>
<dbReference type="Pfam" id="PF18913">
    <property type="entry name" value="FBPase_C"/>
    <property type="match status" value="1"/>
</dbReference>
<dbReference type="PIRSF" id="PIRSF500210">
    <property type="entry name" value="FBPtase"/>
    <property type="match status" value="1"/>
</dbReference>
<dbReference type="PIRSF" id="PIRSF000904">
    <property type="entry name" value="FBPtase_SBPase"/>
    <property type="match status" value="1"/>
</dbReference>
<dbReference type="PRINTS" id="PR00115">
    <property type="entry name" value="F16BPHPHTASE"/>
</dbReference>
<dbReference type="SUPFAM" id="SSF56655">
    <property type="entry name" value="Carbohydrate phosphatase"/>
    <property type="match status" value="1"/>
</dbReference>
<dbReference type="PROSITE" id="PS00124">
    <property type="entry name" value="FBPASE"/>
    <property type="match status" value="1"/>
</dbReference>
<keyword id="KW-0021">Allosteric enzyme</keyword>
<keyword id="KW-0119">Carbohydrate metabolism</keyword>
<keyword id="KW-0378">Hydrolase</keyword>
<keyword id="KW-0460">Magnesium</keyword>
<keyword id="KW-0479">Metal-binding</keyword>
<keyword id="KW-1185">Reference proteome</keyword>
<comment type="catalytic activity">
    <reaction>
        <text>beta-D-fructose 1,6-bisphosphate + H2O = beta-D-fructose 6-phosphate + phosphate</text>
        <dbReference type="Rhea" id="RHEA:11064"/>
        <dbReference type="ChEBI" id="CHEBI:15377"/>
        <dbReference type="ChEBI" id="CHEBI:32966"/>
        <dbReference type="ChEBI" id="CHEBI:43474"/>
        <dbReference type="ChEBI" id="CHEBI:57634"/>
        <dbReference type="EC" id="3.1.3.11"/>
    </reaction>
</comment>
<comment type="cofactor">
    <cofactor evidence="2">
        <name>Mg(2+)</name>
        <dbReference type="ChEBI" id="CHEBI:18420"/>
    </cofactor>
    <text evidence="2">Binds 3 Mg(2+) ions per subunit.</text>
</comment>
<comment type="activity regulation">
    <text evidence="1">Subject to complex allosteric regulation. The enzyme can assume an active R-state, or an inactive T-state. Intermediate conformations may exist. AMP acts as allosteric inhibitor. AMP binding affects the turnover of bound substrate and not the affinity for substrate (By similarity).</text>
</comment>
<comment type="pathway">
    <text>Carbohydrate biosynthesis; gluconeogenesis.</text>
</comment>
<comment type="subunit">
    <text evidence="2">Homotetramer.</text>
</comment>
<comment type="similarity">
    <text evidence="3">Belongs to the FBPase class 1 family.</text>
</comment>
<feature type="initiator methionine" description="Removed" evidence="3">
    <location>
        <position position="1"/>
    </location>
</feature>
<feature type="chain" id="PRO_0000200509" description="Fructose-1,6-bisphosphatase">
    <location>
        <begin position="2"/>
        <end position="355"/>
    </location>
</feature>
<feature type="binding site" evidence="2">
    <location>
        <begin position="25"/>
        <end position="30"/>
    </location>
    <ligand>
        <name>AMP</name>
        <dbReference type="ChEBI" id="CHEBI:456215"/>
    </ligand>
</feature>
<feature type="binding site" evidence="2">
    <location>
        <begin position="37"/>
        <end position="41"/>
    </location>
    <ligand>
        <name>AMP</name>
        <dbReference type="ChEBI" id="CHEBI:456215"/>
    </ligand>
</feature>
<feature type="binding site" evidence="2">
    <location>
        <position position="78"/>
    </location>
    <ligand>
        <name>Mg(2+)</name>
        <dbReference type="ChEBI" id="CHEBI:18420"/>
        <label>1</label>
    </ligand>
</feature>
<feature type="binding site" evidence="2">
    <location>
        <position position="107"/>
    </location>
    <ligand>
        <name>Mg(2+)</name>
        <dbReference type="ChEBI" id="CHEBI:18420"/>
        <label>1</label>
    </ligand>
</feature>
<feature type="binding site" evidence="2">
    <location>
        <position position="107"/>
    </location>
    <ligand>
        <name>Mg(2+)</name>
        <dbReference type="ChEBI" id="CHEBI:18420"/>
        <label>2</label>
    </ligand>
</feature>
<feature type="binding site" evidence="2">
    <location>
        <begin position="121"/>
        <end position="122"/>
    </location>
    <ligand>
        <name>AMP</name>
        <dbReference type="ChEBI" id="CHEBI:456215"/>
    </ligand>
</feature>
<feature type="binding site" evidence="2">
    <location>
        <position position="127"/>
    </location>
    <ligand>
        <name>Mg(2+)</name>
        <dbReference type="ChEBI" id="CHEBI:18420"/>
        <label>2</label>
    </ligand>
</feature>
<feature type="binding site" evidence="2">
    <location>
        <position position="127"/>
    </location>
    <ligand>
        <name>Mg(2+)</name>
        <dbReference type="ChEBI" id="CHEBI:18420"/>
        <label>3</label>
    </ligand>
</feature>
<feature type="binding site" evidence="2">
    <location>
        <position position="129"/>
    </location>
    <ligand>
        <name>Mg(2+)</name>
        <dbReference type="ChEBI" id="CHEBI:18420"/>
        <label>2</label>
    </ligand>
</feature>
<feature type="binding site" evidence="2">
    <location>
        <begin position="130"/>
        <end position="133"/>
    </location>
    <ligand>
        <name>substrate</name>
    </ligand>
</feature>
<feature type="binding site" evidence="2">
    <location>
        <position position="130"/>
    </location>
    <ligand>
        <name>Mg(2+)</name>
        <dbReference type="ChEBI" id="CHEBI:18420"/>
        <label>3</label>
    </ligand>
</feature>
<feature type="binding site" evidence="2">
    <location>
        <position position="149"/>
    </location>
    <ligand>
        <name>AMP</name>
        <dbReference type="ChEBI" id="CHEBI:456215"/>
    </ligand>
</feature>
<feature type="binding site" evidence="2">
    <location>
        <begin position="230"/>
        <end position="233"/>
    </location>
    <ligand>
        <name>substrate</name>
    </ligand>
</feature>
<feature type="binding site" evidence="2">
    <location>
        <begin position="263"/>
        <end position="268"/>
    </location>
    <ligand>
        <name>substrate</name>
    </ligand>
</feature>
<feature type="binding site" evidence="2">
    <location>
        <position position="284"/>
    </location>
    <ligand>
        <name>substrate</name>
    </ligand>
</feature>
<feature type="binding site" evidence="2">
    <location>
        <begin position="294"/>
        <end position="296"/>
    </location>
    <ligand>
        <name>substrate</name>
    </ligand>
</feature>
<feature type="binding site" evidence="2">
    <location>
        <position position="300"/>
    </location>
    <ligand>
        <name>Mg(2+)</name>
        <dbReference type="ChEBI" id="CHEBI:18420"/>
        <label>3</label>
    </ligand>
</feature>
<protein>
    <recommendedName>
        <fullName>Fructose-1,6-bisphosphatase</fullName>
        <shortName>FBPase</shortName>
        <ecNumber>3.1.3.11</ecNumber>
    </recommendedName>
    <alternativeName>
        <fullName>D-fructose-1,6-bisphosphate 1-phosphohydrolase</fullName>
    </alternativeName>
</protein>
<reference key="1">
    <citation type="journal article" date="1993" name="Eur. J. Biochem.">
        <title>Fructose-1,6-bisphosphatase of the yeast Kluyveromyces lactis.</title>
        <authorList>
            <person name="Zaror I."/>
            <person name="Marcus F."/>
            <person name="Moyer D.L."/>
            <person name="Tung J."/>
            <person name="Shuster J.R."/>
        </authorList>
    </citation>
    <scope>NUCLEOTIDE SEQUENCE [GENOMIC DNA]</scope>
    <source>
        <strain>SD11</strain>
    </source>
</reference>
<reference key="2">
    <citation type="journal article" date="2004" name="Nature">
        <title>Genome evolution in yeasts.</title>
        <authorList>
            <person name="Dujon B."/>
            <person name="Sherman D."/>
            <person name="Fischer G."/>
            <person name="Durrens P."/>
            <person name="Casaregola S."/>
            <person name="Lafontaine I."/>
            <person name="de Montigny J."/>
            <person name="Marck C."/>
            <person name="Neuveglise C."/>
            <person name="Talla E."/>
            <person name="Goffard N."/>
            <person name="Frangeul L."/>
            <person name="Aigle M."/>
            <person name="Anthouard V."/>
            <person name="Babour A."/>
            <person name="Barbe V."/>
            <person name="Barnay S."/>
            <person name="Blanchin S."/>
            <person name="Beckerich J.-M."/>
            <person name="Beyne E."/>
            <person name="Bleykasten C."/>
            <person name="Boisrame A."/>
            <person name="Boyer J."/>
            <person name="Cattolico L."/>
            <person name="Confanioleri F."/>
            <person name="de Daruvar A."/>
            <person name="Despons L."/>
            <person name="Fabre E."/>
            <person name="Fairhead C."/>
            <person name="Ferry-Dumazet H."/>
            <person name="Groppi A."/>
            <person name="Hantraye F."/>
            <person name="Hennequin C."/>
            <person name="Jauniaux N."/>
            <person name="Joyet P."/>
            <person name="Kachouri R."/>
            <person name="Kerrest A."/>
            <person name="Koszul R."/>
            <person name="Lemaire M."/>
            <person name="Lesur I."/>
            <person name="Ma L."/>
            <person name="Muller H."/>
            <person name="Nicaud J.-M."/>
            <person name="Nikolski M."/>
            <person name="Oztas S."/>
            <person name="Ozier-Kalogeropoulos O."/>
            <person name="Pellenz S."/>
            <person name="Potier S."/>
            <person name="Richard G.-F."/>
            <person name="Straub M.-L."/>
            <person name="Suleau A."/>
            <person name="Swennen D."/>
            <person name="Tekaia F."/>
            <person name="Wesolowski-Louvel M."/>
            <person name="Westhof E."/>
            <person name="Wirth B."/>
            <person name="Zeniou-Meyer M."/>
            <person name="Zivanovic Y."/>
            <person name="Bolotin-Fukuhara M."/>
            <person name="Thierry A."/>
            <person name="Bouchier C."/>
            <person name="Caudron B."/>
            <person name="Scarpelli C."/>
            <person name="Gaillardin C."/>
            <person name="Weissenbach J."/>
            <person name="Wincker P."/>
            <person name="Souciet J.-L."/>
        </authorList>
    </citation>
    <scope>NUCLEOTIDE SEQUENCE [LARGE SCALE GENOMIC DNA]</scope>
    <source>
        <strain>ATCC 8585 / CBS 2359 / DSM 70799 / NBRC 1267 / NRRL Y-1140 / WM37</strain>
    </source>
</reference>